<sequence length="232" mass="24171">MDAREMKIKAAEAALAHVEDGMRLGIGTGSTAEEFVRLLAEKVAGGFRVEGVPTSERTARLCVELGVPLKSLDELPALDLTVDGADEVDPALRLIKGGGGALLREKIVAAASERMIVIADESKLVDTLGAYALPIEVNPFGLVSTRIAIEKVAARLGLSGELSLRQSGDGEFTTDGGHHIIDASFGRIPDAEALSSELNSIPGVVEHGLFINMAALAIIAGPAGARTLQANR</sequence>
<comment type="function">
    <text evidence="1">Catalyzes the reversible conversion of ribose-5-phosphate to ribulose 5-phosphate.</text>
</comment>
<comment type="catalytic activity">
    <reaction evidence="1">
        <text>aldehydo-D-ribose 5-phosphate = D-ribulose 5-phosphate</text>
        <dbReference type="Rhea" id="RHEA:14657"/>
        <dbReference type="ChEBI" id="CHEBI:58121"/>
        <dbReference type="ChEBI" id="CHEBI:58273"/>
        <dbReference type="EC" id="5.3.1.6"/>
    </reaction>
</comment>
<comment type="pathway">
    <text evidence="1">Carbohydrate degradation; pentose phosphate pathway; D-ribose 5-phosphate from D-ribulose 5-phosphate (non-oxidative stage): step 1/1.</text>
</comment>
<comment type="subunit">
    <text evidence="1">Homodimer.</text>
</comment>
<comment type="similarity">
    <text evidence="1">Belongs to the ribose 5-phosphate isomerase family.</text>
</comment>
<reference key="1">
    <citation type="journal article" date="2010" name="Appl. Environ. Microbiol.">
        <title>Conserved symbiotic plasmid DNA sequences in the multireplicon pangenomic structure of Rhizobium etli.</title>
        <authorList>
            <person name="Gonzalez V."/>
            <person name="Acosta J.L."/>
            <person name="Santamaria R.I."/>
            <person name="Bustos P."/>
            <person name="Fernandez J.L."/>
            <person name="Hernandez Gonzalez I.L."/>
            <person name="Diaz R."/>
            <person name="Flores M."/>
            <person name="Palacios R."/>
            <person name="Mora J."/>
            <person name="Davila G."/>
        </authorList>
    </citation>
    <scope>NUCLEOTIDE SEQUENCE [LARGE SCALE GENOMIC DNA]</scope>
    <source>
        <strain>CIAT 652</strain>
    </source>
</reference>
<protein>
    <recommendedName>
        <fullName evidence="1">Ribose-5-phosphate isomerase A</fullName>
        <ecNumber evidence="1">5.3.1.6</ecNumber>
    </recommendedName>
    <alternativeName>
        <fullName evidence="1">Phosphoriboisomerase A</fullName>
        <shortName evidence="1">PRI</shortName>
    </alternativeName>
</protein>
<evidence type="ECO:0000255" key="1">
    <source>
        <dbReference type="HAMAP-Rule" id="MF_00170"/>
    </source>
</evidence>
<name>RPIA_RHIE6</name>
<accession>B3PPZ4</accession>
<dbReference type="EC" id="5.3.1.6" evidence="1"/>
<dbReference type="EMBL" id="CP001074">
    <property type="protein sequence ID" value="ACE91423.1"/>
    <property type="molecule type" value="Genomic_DNA"/>
</dbReference>
<dbReference type="SMR" id="B3PPZ4"/>
<dbReference type="KEGG" id="rec:RHECIAT_CH0002471"/>
<dbReference type="eggNOG" id="COG0120">
    <property type="taxonomic scope" value="Bacteria"/>
</dbReference>
<dbReference type="HOGENOM" id="CLU_056590_1_0_5"/>
<dbReference type="UniPathway" id="UPA00115">
    <property type="reaction ID" value="UER00412"/>
</dbReference>
<dbReference type="Proteomes" id="UP000008817">
    <property type="component" value="Chromosome"/>
</dbReference>
<dbReference type="GO" id="GO:0004751">
    <property type="term" value="F:ribose-5-phosphate isomerase activity"/>
    <property type="evidence" value="ECO:0007669"/>
    <property type="project" value="UniProtKB-UniRule"/>
</dbReference>
<dbReference type="GO" id="GO:0009052">
    <property type="term" value="P:pentose-phosphate shunt, non-oxidative branch"/>
    <property type="evidence" value="ECO:0007669"/>
    <property type="project" value="UniProtKB-UniRule"/>
</dbReference>
<dbReference type="CDD" id="cd01398">
    <property type="entry name" value="RPI_A"/>
    <property type="match status" value="1"/>
</dbReference>
<dbReference type="FunFam" id="3.40.50.1360:FF:000001">
    <property type="entry name" value="Ribose-5-phosphate isomerase A"/>
    <property type="match status" value="1"/>
</dbReference>
<dbReference type="Gene3D" id="3.30.70.260">
    <property type="match status" value="1"/>
</dbReference>
<dbReference type="Gene3D" id="3.40.50.1360">
    <property type="match status" value="1"/>
</dbReference>
<dbReference type="HAMAP" id="MF_00170">
    <property type="entry name" value="Rib_5P_isom_A"/>
    <property type="match status" value="1"/>
</dbReference>
<dbReference type="InterPro" id="IPR037171">
    <property type="entry name" value="NagB/RpiA_transferase-like"/>
</dbReference>
<dbReference type="InterPro" id="IPR050262">
    <property type="entry name" value="Ribose-5P_isomerase"/>
</dbReference>
<dbReference type="InterPro" id="IPR020672">
    <property type="entry name" value="Ribose5P_isomerase_typA_subgr"/>
</dbReference>
<dbReference type="InterPro" id="IPR004788">
    <property type="entry name" value="Ribose5P_isomerase_type_A"/>
</dbReference>
<dbReference type="NCBIfam" id="NF001924">
    <property type="entry name" value="PRK00702.1"/>
    <property type="match status" value="1"/>
</dbReference>
<dbReference type="NCBIfam" id="TIGR00021">
    <property type="entry name" value="rpiA"/>
    <property type="match status" value="1"/>
</dbReference>
<dbReference type="PANTHER" id="PTHR43748">
    <property type="entry name" value="RIBOSE-5-PHOSPHATE ISOMERASE 3, CHLOROPLASTIC-RELATED"/>
    <property type="match status" value="1"/>
</dbReference>
<dbReference type="PANTHER" id="PTHR43748:SF3">
    <property type="entry name" value="RIBOSE-5-PHOSPHATE ISOMERASE 3, CHLOROPLASTIC-RELATED"/>
    <property type="match status" value="1"/>
</dbReference>
<dbReference type="Pfam" id="PF06026">
    <property type="entry name" value="Rib_5-P_isom_A"/>
    <property type="match status" value="1"/>
</dbReference>
<dbReference type="SUPFAM" id="SSF75445">
    <property type="entry name" value="D-ribose-5-phosphate isomerase (RpiA), lid domain"/>
    <property type="match status" value="1"/>
</dbReference>
<dbReference type="SUPFAM" id="SSF100950">
    <property type="entry name" value="NagB/RpiA/CoA transferase-like"/>
    <property type="match status" value="1"/>
</dbReference>
<organism>
    <name type="scientific">Rhizobium etli (strain CIAT 652)</name>
    <dbReference type="NCBI Taxonomy" id="491916"/>
    <lineage>
        <taxon>Bacteria</taxon>
        <taxon>Pseudomonadati</taxon>
        <taxon>Pseudomonadota</taxon>
        <taxon>Alphaproteobacteria</taxon>
        <taxon>Hyphomicrobiales</taxon>
        <taxon>Rhizobiaceae</taxon>
        <taxon>Rhizobium/Agrobacterium group</taxon>
        <taxon>Rhizobium</taxon>
    </lineage>
</organism>
<gene>
    <name evidence="1" type="primary">rpiA</name>
    <name type="ordered locus">RHECIAT_CH0002471</name>
</gene>
<proteinExistence type="inferred from homology"/>
<keyword id="KW-0413">Isomerase</keyword>
<feature type="chain" id="PRO_1000097686" description="Ribose-5-phosphate isomerase A">
    <location>
        <begin position="1"/>
        <end position="232"/>
    </location>
</feature>
<feature type="active site" description="Proton acceptor" evidence="1">
    <location>
        <position position="105"/>
    </location>
</feature>
<feature type="binding site" evidence="1">
    <location>
        <begin position="28"/>
        <end position="31"/>
    </location>
    <ligand>
        <name>substrate</name>
    </ligand>
</feature>
<feature type="binding site" evidence="1">
    <location>
        <begin position="83"/>
        <end position="86"/>
    </location>
    <ligand>
        <name>substrate</name>
    </ligand>
</feature>
<feature type="binding site" evidence="1">
    <location>
        <begin position="96"/>
        <end position="99"/>
    </location>
    <ligand>
        <name>substrate</name>
    </ligand>
</feature>
<feature type="binding site" evidence="1">
    <location>
        <position position="123"/>
    </location>
    <ligand>
        <name>substrate</name>
    </ligand>
</feature>